<comment type="function">
    <text evidence="4">Inhibits host platelet aggregation induced by low doses of collagen.</text>
</comment>
<comment type="subcellular location">
    <subcellularLocation>
        <location evidence="6">Secreted</location>
    </subcellularLocation>
</comment>
<comment type="tissue specificity">
    <text evidence="3">Salivary gland (at protein level).</text>
</comment>
<comment type="similarity">
    <text evidence="6">Belongs to the CRISP family. Venom allergen 5-like subfamily.</text>
</comment>
<dbReference type="EMBL" id="EF639012">
    <property type="protein sequence ID" value="ABR27897.1"/>
    <property type="molecule type" value="mRNA"/>
</dbReference>
<dbReference type="SMR" id="A6YPK1"/>
<dbReference type="GO" id="GO:0005576">
    <property type="term" value="C:extracellular region"/>
    <property type="evidence" value="ECO:0007669"/>
    <property type="project" value="UniProtKB-SubCell"/>
</dbReference>
<dbReference type="GO" id="GO:0090729">
    <property type="term" value="F:toxin activity"/>
    <property type="evidence" value="ECO:0007669"/>
    <property type="project" value="UniProtKB-KW"/>
</dbReference>
<dbReference type="GO" id="GO:0035893">
    <property type="term" value="P:suppression of platelet aggregation in another organism"/>
    <property type="evidence" value="ECO:0000314"/>
    <property type="project" value="UniProtKB"/>
</dbReference>
<dbReference type="CDD" id="cd05380">
    <property type="entry name" value="CAP_euk"/>
    <property type="match status" value="1"/>
</dbReference>
<dbReference type="Gene3D" id="3.40.33.10">
    <property type="entry name" value="CAP"/>
    <property type="match status" value="1"/>
</dbReference>
<dbReference type="InterPro" id="IPR018244">
    <property type="entry name" value="Allrgn_V5/Tpx1_CS"/>
</dbReference>
<dbReference type="InterPro" id="IPR014044">
    <property type="entry name" value="CAP_dom"/>
</dbReference>
<dbReference type="InterPro" id="IPR035940">
    <property type="entry name" value="CAP_sf"/>
</dbReference>
<dbReference type="InterPro" id="IPR001283">
    <property type="entry name" value="CRISP-related"/>
</dbReference>
<dbReference type="InterPro" id="IPR002413">
    <property type="entry name" value="V5_allergen-like"/>
</dbReference>
<dbReference type="PANTHER" id="PTHR10334">
    <property type="entry name" value="CYSTEINE-RICH SECRETORY PROTEIN-RELATED"/>
    <property type="match status" value="1"/>
</dbReference>
<dbReference type="Pfam" id="PF00188">
    <property type="entry name" value="CAP"/>
    <property type="match status" value="1"/>
</dbReference>
<dbReference type="PRINTS" id="PR00838">
    <property type="entry name" value="V5ALLERGEN"/>
</dbReference>
<dbReference type="PRINTS" id="PR00837">
    <property type="entry name" value="V5TPXLIKE"/>
</dbReference>
<dbReference type="SMART" id="SM00198">
    <property type="entry name" value="SCP"/>
    <property type="match status" value="1"/>
</dbReference>
<dbReference type="SUPFAM" id="SSF55797">
    <property type="entry name" value="PR-1-like"/>
    <property type="match status" value="1"/>
</dbReference>
<dbReference type="PROSITE" id="PS01009">
    <property type="entry name" value="CRISP_1"/>
    <property type="match status" value="1"/>
</dbReference>
<dbReference type="PROSITE" id="PS01010">
    <property type="entry name" value="CRISP_2"/>
    <property type="match status" value="1"/>
</dbReference>
<organism evidence="7">
    <name type="scientific">Triatoma infestans</name>
    <name type="common">Assassin bug</name>
    <dbReference type="NCBI Taxonomy" id="30076"/>
    <lineage>
        <taxon>Eukaryota</taxon>
        <taxon>Metazoa</taxon>
        <taxon>Ecdysozoa</taxon>
        <taxon>Arthropoda</taxon>
        <taxon>Hexapoda</taxon>
        <taxon>Insecta</taxon>
        <taxon>Pterygota</taxon>
        <taxon>Neoptera</taxon>
        <taxon>Paraneoptera</taxon>
        <taxon>Hemiptera</taxon>
        <taxon>Heteroptera</taxon>
        <taxon>Panheteroptera</taxon>
        <taxon>Cimicomorpha</taxon>
        <taxon>Reduviidae</taxon>
        <taxon>Triatominae</taxon>
        <taxon>Triatoma</taxon>
    </lineage>
</organism>
<evidence type="ECO:0000255" key="1"/>
<evidence type="ECO:0000255" key="2">
    <source>
        <dbReference type="PROSITE-ProRule" id="PRU00498"/>
    </source>
</evidence>
<evidence type="ECO:0000269" key="3">
    <source>
    </source>
</evidence>
<evidence type="ECO:0000269" key="4">
    <source>
    </source>
</evidence>
<evidence type="ECO:0000303" key="5">
    <source>
    </source>
</evidence>
<evidence type="ECO:0000305" key="6"/>
<evidence type="ECO:0000312" key="7">
    <source>
        <dbReference type="EMBL" id="ABR27897.1"/>
    </source>
</evidence>
<name>VA5_TRIIF</name>
<accession>A6YPK1</accession>
<feature type="signal peptide" evidence="1">
    <location>
        <begin position="1"/>
        <end position="23"/>
    </location>
</feature>
<feature type="chain" id="PRO_5002705265" description="Salivary antigen-5" evidence="1">
    <location>
        <begin position="24"/>
        <end position="244"/>
    </location>
</feature>
<feature type="domain" description="SCP" evidence="1">
    <location>
        <begin position="46"/>
        <end position="202"/>
    </location>
</feature>
<feature type="glycosylation site" description="N-linked (GlcNAc...) asparagine" evidence="2">
    <location>
        <position position="106"/>
    </location>
</feature>
<feature type="glycosylation site" description="N-linked (GlcNAc...) asparagine" evidence="2">
    <location>
        <position position="172"/>
    </location>
</feature>
<reference evidence="7" key="1">
    <citation type="journal article" date="2008" name="Insect Biochem. Mol. Biol.">
        <title>An insight into the sialome of the blood-sucking bug Triatoma infestans, a vector of Chagas' disease.</title>
        <authorList>
            <person name="Assumpcao T.C.F."/>
            <person name="Francischetti I.M.B."/>
            <person name="Andersen J.F."/>
            <person name="Schwarz A."/>
            <person name="Santana J.M."/>
            <person name="Ribeiro J.M.C."/>
        </authorList>
    </citation>
    <scope>NUCLEOTIDE SEQUENCE [LARGE SCALE MRNA]</scope>
    <scope>TISSUE SPECIFICITY</scope>
    <source>
        <tissue evidence="7">Salivary gland</tissue>
    </source>
</reference>
<reference evidence="6" key="2">
    <citation type="journal article" date="2013" name="J. Biol. Chem.">
        <title>Salivary antigen-5/CAP family members are Cu2+-dependent antioxidant enzymes that scavenge O(2)-. and inhibit collagen-induced platelet aggregation and neutrophil oxidative burst.</title>
        <authorList>
            <person name="Assumpcao T.C.F."/>
            <person name="Ma D."/>
            <person name="Schwarz A."/>
            <person name="Reiter K."/>
            <person name="Santana J.M."/>
            <person name="Andersen J.F."/>
            <person name="Ribeiro J.M.C."/>
            <person name="Nardone G."/>
            <person name="Yu L.L."/>
            <person name="Francischetti I.M.B."/>
        </authorList>
    </citation>
    <scope>FUNCTION</scope>
</reference>
<keyword id="KW-0325">Glycoprotein</keyword>
<keyword id="KW-1199">Hemostasis impairing toxin</keyword>
<keyword id="KW-1201">Platelet aggregation inhibiting toxin</keyword>
<keyword id="KW-0964">Secreted</keyword>
<keyword id="KW-0732">Signal</keyword>
<keyword id="KW-0800">Toxin</keyword>
<sequence>MAKAHSSLVFCLLALALVRFAQAKCTNGYTFLGIKELSEKDKQKLLDFHNKFRELTAAGEAPAPKGEDGRERRQPPAANMLELTWHKKAEKQAYKWARTCEWKHNNATDKAGNSMGQNLGRKMSTEKTDVDDTFDKWSYDLVRGWFDEAKLYKYGSGFSMSTGHYTQVVWANTSQVGCGYSYYMQIDEYNQKWYTGYLVCNYSPAGNFNNREPYEISKEKCTDPKLESSKNYKHLCVLKKKKKN</sequence>
<protein>
    <recommendedName>
        <fullName evidence="5">Salivary antigen-5</fullName>
    </recommendedName>
    <alternativeName>
        <fullName evidence="5">TIAV</fullName>
    </alternativeName>
</protein>
<proteinExistence type="evidence at protein level"/>